<name>PSTB_TRIEI</name>
<keyword id="KW-0067">ATP-binding</keyword>
<keyword id="KW-0997">Cell inner membrane</keyword>
<keyword id="KW-1003">Cell membrane</keyword>
<keyword id="KW-0472">Membrane</keyword>
<keyword id="KW-0547">Nucleotide-binding</keyword>
<keyword id="KW-0592">Phosphate transport</keyword>
<keyword id="KW-1278">Translocase</keyword>
<keyword id="KW-0813">Transport</keyword>
<proteinExistence type="inferred from homology"/>
<dbReference type="EC" id="7.3.2.1" evidence="1"/>
<dbReference type="EMBL" id="CP000393">
    <property type="protein sequence ID" value="ABG52627.1"/>
    <property type="molecule type" value="Genomic_DNA"/>
</dbReference>
<dbReference type="RefSeq" id="WP_011612968.1">
    <property type="nucleotide sequence ID" value="NC_008312.1"/>
</dbReference>
<dbReference type="SMR" id="Q10YP7"/>
<dbReference type="STRING" id="203124.Tery_3540"/>
<dbReference type="KEGG" id="ter:Tery_3540"/>
<dbReference type="eggNOG" id="COG1117">
    <property type="taxonomic scope" value="Bacteria"/>
</dbReference>
<dbReference type="HOGENOM" id="CLU_000604_1_22_3"/>
<dbReference type="OrthoDB" id="9802185at2"/>
<dbReference type="GO" id="GO:0005886">
    <property type="term" value="C:plasma membrane"/>
    <property type="evidence" value="ECO:0007669"/>
    <property type="project" value="UniProtKB-SubCell"/>
</dbReference>
<dbReference type="GO" id="GO:0005524">
    <property type="term" value="F:ATP binding"/>
    <property type="evidence" value="ECO:0007669"/>
    <property type="project" value="UniProtKB-KW"/>
</dbReference>
<dbReference type="GO" id="GO:0016887">
    <property type="term" value="F:ATP hydrolysis activity"/>
    <property type="evidence" value="ECO:0007669"/>
    <property type="project" value="InterPro"/>
</dbReference>
<dbReference type="GO" id="GO:0015415">
    <property type="term" value="F:ATPase-coupled phosphate ion transmembrane transporter activity"/>
    <property type="evidence" value="ECO:0007669"/>
    <property type="project" value="UniProtKB-EC"/>
</dbReference>
<dbReference type="GO" id="GO:0035435">
    <property type="term" value="P:phosphate ion transmembrane transport"/>
    <property type="evidence" value="ECO:0007669"/>
    <property type="project" value="InterPro"/>
</dbReference>
<dbReference type="CDD" id="cd03260">
    <property type="entry name" value="ABC_PstB_phosphate_transporter"/>
    <property type="match status" value="1"/>
</dbReference>
<dbReference type="Gene3D" id="3.40.50.300">
    <property type="entry name" value="P-loop containing nucleotide triphosphate hydrolases"/>
    <property type="match status" value="1"/>
</dbReference>
<dbReference type="InterPro" id="IPR003593">
    <property type="entry name" value="AAA+_ATPase"/>
</dbReference>
<dbReference type="InterPro" id="IPR003439">
    <property type="entry name" value="ABC_transporter-like_ATP-bd"/>
</dbReference>
<dbReference type="InterPro" id="IPR017871">
    <property type="entry name" value="ABC_transporter-like_CS"/>
</dbReference>
<dbReference type="InterPro" id="IPR027417">
    <property type="entry name" value="P-loop_NTPase"/>
</dbReference>
<dbReference type="InterPro" id="IPR005670">
    <property type="entry name" value="PstB-like"/>
</dbReference>
<dbReference type="NCBIfam" id="TIGR00972">
    <property type="entry name" value="3a0107s01c2"/>
    <property type="match status" value="1"/>
</dbReference>
<dbReference type="PANTHER" id="PTHR43423">
    <property type="entry name" value="ABC TRANSPORTER I FAMILY MEMBER 17"/>
    <property type="match status" value="1"/>
</dbReference>
<dbReference type="PANTHER" id="PTHR43423:SF1">
    <property type="entry name" value="ABC TRANSPORTER I FAMILY MEMBER 17"/>
    <property type="match status" value="1"/>
</dbReference>
<dbReference type="Pfam" id="PF00005">
    <property type="entry name" value="ABC_tran"/>
    <property type="match status" value="1"/>
</dbReference>
<dbReference type="SMART" id="SM00382">
    <property type="entry name" value="AAA"/>
    <property type="match status" value="1"/>
</dbReference>
<dbReference type="SUPFAM" id="SSF52540">
    <property type="entry name" value="P-loop containing nucleoside triphosphate hydrolases"/>
    <property type="match status" value="1"/>
</dbReference>
<dbReference type="PROSITE" id="PS00211">
    <property type="entry name" value="ABC_TRANSPORTER_1"/>
    <property type="match status" value="1"/>
</dbReference>
<dbReference type="PROSITE" id="PS50893">
    <property type="entry name" value="ABC_TRANSPORTER_2"/>
    <property type="match status" value="1"/>
</dbReference>
<dbReference type="PROSITE" id="PS51238">
    <property type="entry name" value="PSTB"/>
    <property type="match status" value="1"/>
</dbReference>
<feature type="chain" id="PRO_0000272570" description="Phosphate import ATP-binding protein PstB">
    <location>
        <begin position="1"/>
        <end position="273"/>
    </location>
</feature>
<feature type="domain" description="ABC transporter" evidence="1">
    <location>
        <begin position="17"/>
        <end position="259"/>
    </location>
</feature>
<feature type="binding site" evidence="1">
    <location>
        <begin position="49"/>
        <end position="56"/>
    </location>
    <ligand>
        <name>ATP</name>
        <dbReference type="ChEBI" id="CHEBI:30616"/>
    </ligand>
</feature>
<gene>
    <name evidence="1" type="primary">pstB</name>
    <name type="ordered locus">Tery_3540</name>
</gene>
<organism>
    <name type="scientific">Trichodesmium erythraeum (strain IMS101)</name>
    <dbReference type="NCBI Taxonomy" id="203124"/>
    <lineage>
        <taxon>Bacteria</taxon>
        <taxon>Bacillati</taxon>
        <taxon>Cyanobacteriota</taxon>
        <taxon>Cyanophyceae</taxon>
        <taxon>Oscillatoriophycideae</taxon>
        <taxon>Oscillatoriales</taxon>
        <taxon>Microcoleaceae</taxon>
        <taxon>Trichodesmium</taxon>
    </lineage>
</organism>
<protein>
    <recommendedName>
        <fullName evidence="1">Phosphate import ATP-binding protein PstB</fullName>
        <ecNumber evidence="1">7.3.2.1</ecNumber>
    </recommendedName>
    <alternativeName>
        <fullName evidence="1">ABC phosphate transporter</fullName>
    </alternativeName>
    <alternativeName>
        <fullName evidence="1">Phosphate-transporting ATPase</fullName>
    </alternativeName>
</protein>
<accession>Q10YP7</accession>
<sequence>MLEHQTNTYQQNSTPALSAENLSIFYGDFKALKDISMRIPKNKVTAFIGPSGCGKSTLLRCFNRLNDLIDIFRLEGRILYHNQNIYDPDIDPVEIRRHIGMVFQKPNPFPKSIYDNIAYGVRVNGLAKSKEEMDEIVERSLRQAVLWDEVKDKLGQSGFALSGGQQQRLCIARAVAISPDVVLMDEPCASLDPISTVKVEELINELRQKYTIIIVTHNMQQATRIADLTAFFNAKAVESGQRFGYLVEFDKTNNIFQNPREKATQDYVSGRFG</sequence>
<evidence type="ECO:0000255" key="1">
    <source>
        <dbReference type="HAMAP-Rule" id="MF_01702"/>
    </source>
</evidence>
<reference key="1">
    <citation type="journal article" date="2015" name="Proc. Natl. Acad. Sci. U.S.A.">
        <title>Trichodesmium genome maintains abundant, widespread noncoding DNA in situ, despite oligotrophic lifestyle.</title>
        <authorList>
            <person name="Walworth N."/>
            <person name="Pfreundt U."/>
            <person name="Nelson W.C."/>
            <person name="Mincer T."/>
            <person name="Heidelberg J.F."/>
            <person name="Fu F."/>
            <person name="Waterbury J.B."/>
            <person name="Glavina del Rio T."/>
            <person name="Goodwin L."/>
            <person name="Kyrpides N.C."/>
            <person name="Land M.L."/>
            <person name="Woyke T."/>
            <person name="Hutchins D.A."/>
            <person name="Hess W.R."/>
            <person name="Webb E.A."/>
        </authorList>
    </citation>
    <scope>NUCLEOTIDE SEQUENCE [LARGE SCALE GENOMIC DNA]</scope>
    <source>
        <strain>IMS101</strain>
    </source>
</reference>
<comment type="function">
    <text evidence="1">Part of the ABC transporter complex PstSACB involved in phosphate import. Responsible for energy coupling to the transport system.</text>
</comment>
<comment type="catalytic activity">
    <reaction evidence="1">
        <text>phosphate(out) + ATP + H2O = ADP + 2 phosphate(in) + H(+)</text>
        <dbReference type="Rhea" id="RHEA:24440"/>
        <dbReference type="ChEBI" id="CHEBI:15377"/>
        <dbReference type="ChEBI" id="CHEBI:15378"/>
        <dbReference type="ChEBI" id="CHEBI:30616"/>
        <dbReference type="ChEBI" id="CHEBI:43474"/>
        <dbReference type="ChEBI" id="CHEBI:456216"/>
        <dbReference type="EC" id="7.3.2.1"/>
    </reaction>
</comment>
<comment type="subunit">
    <text evidence="1">The complex is composed of two ATP-binding proteins (PstB), two transmembrane proteins (PstC and PstA) and a solute-binding protein (PstS).</text>
</comment>
<comment type="subcellular location">
    <subcellularLocation>
        <location evidence="1">Cell inner membrane</location>
        <topology evidence="1">Peripheral membrane protein</topology>
    </subcellularLocation>
</comment>
<comment type="similarity">
    <text evidence="1">Belongs to the ABC transporter superfamily. Phosphate importer (TC 3.A.1.7) family.</text>
</comment>